<evidence type="ECO:0000255" key="1">
    <source>
        <dbReference type="HAMAP-Rule" id="MF_01080"/>
    </source>
</evidence>
<reference key="1">
    <citation type="journal article" date="2011" name="PLoS Genet.">
        <title>The evolution of host specialization in the vertebrate gut symbiont Lactobacillus reuteri.</title>
        <authorList>
            <person name="Frese S.A."/>
            <person name="Benson A.K."/>
            <person name="Tannock G.W."/>
            <person name="Loach D.M."/>
            <person name="Kim J."/>
            <person name="Zhang M."/>
            <person name="Oh P.L."/>
            <person name="Heng N.C."/>
            <person name="Patil P.B."/>
            <person name="Juge N."/>
            <person name="Mackenzie D.A."/>
            <person name="Pearson B.M."/>
            <person name="Lapidus A."/>
            <person name="Dalin E."/>
            <person name="Tice H."/>
            <person name="Goltsman E."/>
            <person name="Land M."/>
            <person name="Hauser L."/>
            <person name="Ivanova N."/>
            <person name="Kyrpides N.C."/>
            <person name="Walter J."/>
        </authorList>
    </citation>
    <scope>NUCLEOTIDE SEQUENCE [LARGE SCALE GENOMIC DNA]</scope>
    <source>
        <strain>DSM 20016</strain>
    </source>
</reference>
<keyword id="KW-0413">Isomerase</keyword>
<keyword id="KW-1185">Reference proteome</keyword>
<keyword id="KW-0819">tRNA processing</keyword>
<gene>
    <name evidence="1" type="primary">truB</name>
    <name type="ordered locus">Lreu_0701</name>
</gene>
<name>TRUB_LIMRD</name>
<accession>A5VJE2</accession>
<dbReference type="EC" id="5.4.99.25" evidence="1"/>
<dbReference type="EMBL" id="CP000705">
    <property type="protein sequence ID" value="ABQ82966.1"/>
    <property type="molecule type" value="Genomic_DNA"/>
</dbReference>
<dbReference type="RefSeq" id="WP_003668179.1">
    <property type="nucleotide sequence ID" value="NC_009513.1"/>
</dbReference>
<dbReference type="SMR" id="A5VJE2"/>
<dbReference type="STRING" id="557436.Lreu_0701"/>
<dbReference type="KEGG" id="lre:Lreu_0701"/>
<dbReference type="PATRIC" id="fig|557436.17.peg.554"/>
<dbReference type="eggNOG" id="COG0130">
    <property type="taxonomic scope" value="Bacteria"/>
</dbReference>
<dbReference type="HOGENOM" id="CLU_032087_0_1_9"/>
<dbReference type="Proteomes" id="UP000001991">
    <property type="component" value="Chromosome"/>
</dbReference>
<dbReference type="GO" id="GO:0003723">
    <property type="term" value="F:RNA binding"/>
    <property type="evidence" value="ECO:0007669"/>
    <property type="project" value="InterPro"/>
</dbReference>
<dbReference type="GO" id="GO:0160148">
    <property type="term" value="F:tRNA pseudouridine(55) synthase activity"/>
    <property type="evidence" value="ECO:0007669"/>
    <property type="project" value="UniProtKB-EC"/>
</dbReference>
<dbReference type="GO" id="GO:1990481">
    <property type="term" value="P:mRNA pseudouridine synthesis"/>
    <property type="evidence" value="ECO:0007669"/>
    <property type="project" value="TreeGrafter"/>
</dbReference>
<dbReference type="GO" id="GO:0031119">
    <property type="term" value="P:tRNA pseudouridine synthesis"/>
    <property type="evidence" value="ECO:0007669"/>
    <property type="project" value="UniProtKB-UniRule"/>
</dbReference>
<dbReference type="CDD" id="cd02573">
    <property type="entry name" value="PseudoU_synth_EcTruB"/>
    <property type="match status" value="1"/>
</dbReference>
<dbReference type="FunFam" id="3.30.2350.10:FF:000011">
    <property type="entry name" value="tRNA pseudouridine synthase B"/>
    <property type="match status" value="1"/>
</dbReference>
<dbReference type="Gene3D" id="3.30.2350.10">
    <property type="entry name" value="Pseudouridine synthase"/>
    <property type="match status" value="1"/>
</dbReference>
<dbReference type="HAMAP" id="MF_01080">
    <property type="entry name" value="TruB_bact"/>
    <property type="match status" value="1"/>
</dbReference>
<dbReference type="InterPro" id="IPR020103">
    <property type="entry name" value="PsdUridine_synth_cat_dom_sf"/>
</dbReference>
<dbReference type="InterPro" id="IPR002501">
    <property type="entry name" value="PsdUridine_synth_N"/>
</dbReference>
<dbReference type="InterPro" id="IPR014780">
    <property type="entry name" value="tRNA_psdUridine_synth_TruB"/>
</dbReference>
<dbReference type="InterPro" id="IPR032819">
    <property type="entry name" value="TruB_C"/>
</dbReference>
<dbReference type="NCBIfam" id="TIGR00431">
    <property type="entry name" value="TruB"/>
    <property type="match status" value="1"/>
</dbReference>
<dbReference type="PANTHER" id="PTHR13767:SF2">
    <property type="entry name" value="PSEUDOURIDYLATE SYNTHASE TRUB1"/>
    <property type="match status" value="1"/>
</dbReference>
<dbReference type="PANTHER" id="PTHR13767">
    <property type="entry name" value="TRNA-PSEUDOURIDINE SYNTHASE"/>
    <property type="match status" value="1"/>
</dbReference>
<dbReference type="Pfam" id="PF16198">
    <property type="entry name" value="TruB_C_2"/>
    <property type="match status" value="1"/>
</dbReference>
<dbReference type="Pfam" id="PF01509">
    <property type="entry name" value="TruB_N"/>
    <property type="match status" value="1"/>
</dbReference>
<dbReference type="SUPFAM" id="SSF55120">
    <property type="entry name" value="Pseudouridine synthase"/>
    <property type="match status" value="1"/>
</dbReference>
<protein>
    <recommendedName>
        <fullName evidence="1">tRNA pseudouridine synthase B</fullName>
        <ecNumber evidence="1">5.4.99.25</ecNumber>
    </recommendedName>
    <alternativeName>
        <fullName evidence="1">tRNA pseudouridine(55) synthase</fullName>
        <shortName evidence="1">Psi55 synthase</shortName>
    </alternativeName>
    <alternativeName>
        <fullName evidence="1">tRNA pseudouridylate synthase</fullName>
    </alternativeName>
    <alternativeName>
        <fullName evidence="1">tRNA-uridine isomerase</fullName>
    </alternativeName>
</protein>
<comment type="function">
    <text evidence="1">Responsible for synthesis of pseudouridine from uracil-55 in the psi GC loop of transfer RNAs.</text>
</comment>
<comment type="catalytic activity">
    <reaction evidence="1">
        <text>uridine(55) in tRNA = pseudouridine(55) in tRNA</text>
        <dbReference type="Rhea" id="RHEA:42532"/>
        <dbReference type="Rhea" id="RHEA-COMP:10101"/>
        <dbReference type="Rhea" id="RHEA-COMP:10102"/>
        <dbReference type="ChEBI" id="CHEBI:65314"/>
        <dbReference type="ChEBI" id="CHEBI:65315"/>
        <dbReference type="EC" id="5.4.99.25"/>
    </reaction>
</comment>
<comment type="similarity">
    <text evidence="1">Belongs to the pseudouridine synthase TruB family. Type 1 subfamily.</text>
</comment>
<organism>
    <name type="scientific">Limosilactobacillus reuteri (strain DSM 20016)</name>
    <name type="common">Lactobacillus reuteri</name>
    <dbReference type="NCBI Taxonomy" id="557436"/>
    <lineage>
        <taxon>Bacteria</taxon>
        <taxon>Bacillati</taxon>
        <taxon>Bacillota</taxon>
        <taxon>Bacilli</taxon>
        <taxon>Lactobacillales</taxon>
        <taxon>Lactobacillaceae</taxon>
        <taxon>Limosilactobacillus</taxon>
    </lineage>
</organism>
<sequence>MDGIIPLYKERGMTSFACVSRLRQILKTKKIGHSGTLDPGVAGVLPICVGNATKVVDYLMQSGKQYQGELLIGFATTTQDLDGDKIEEKVVADEIPTSEILSAMNSLTGTIIQIPPMYSAVKVNGKKLYEYARAGETVERPKRQVTISKFELLSSKYDKKNKQQRIRFNVECSKGTYIRTLVVDLARKLGYPGVMSLLTRLKSGGFTLDQTLSLDDVRDAVATQTLQQYLYPLDYALKDYPQLTIQVAQWKKVQNGGWLSPSELNTSEKEIVLSFDGQVKALYHFDPKNKMYKPTKMFAVN</sequence>
<proteinExistence type="inferred from homology"/>
<feature type="chain" id="PRO_1000084616" description="tRNA pseudouridine synthase B">
    <location>
        <begin position="1"/>
        <end position="301"/>
    </location>
</feature>
<feature type="active site" description="Nucleophile" evidence="1">
    <location>
        <position position="38"/>
    </location>
</feature>